<keyword id="KW-0472">Membrane</keyword>
<keyword id="KW-0602">Photosynthesis</keyword>
<keyword id="KW-0603">Photosystem I</keyword>
<keyword id="KW-0793">Thylakoid</keyword>
<keyword id="KW-0812">Transmembrane</keyword>
<keyword id="KW-1133">Transmembrane helix</keyword>
<evidence type="ECO:0000255" key="1">
    <source>
        <dbReference type="HAMAP-Rule" id="MF_00828"/>
    </source>
</evidence>
<evidence type="ECO:0000305" key="2"/>
<dbReference type="EMBL" id="CP000110">
    <property type="protein sequence ID" value="ABB34510.1"/>
    <property type="status" value="ALT_INIT"/>
    <property type="molecule type" value="Genomic_DNA"/>
</dbReference>
<dbReference type="SMR" id="Q3ALM2"/>
<dbReference type="STRING" id="110662.Syncc9605_0738"/>
<dbReference type="KEGG" id="syd:Syncc9605_0738"/>
<dbReference type="HOGENOM" id="CLU_215773_1_0_3"/>
<dbReference type="GO" id="GO:0009522">
    <property type="term" value="C:photosystem I"/>
    <property type="evidence" value="ECO:0007669"/>
    <property type="project" value="UniProtKB-KW"/>
</dbReference>
<dbReference type="GO" id="GO:0031676">
    <property type="term" value="C:plasma membrane-derived thylakoid membrane"/>
    <property type="evidence" value="ECO:0007669"/>
    <property type="project" value="UniProtKB-SubCell"/>
</dbReference>
<dbReference type="GO" id="GO:0015979">
    <property type="term" value="P:photosynthesis"/>
    <property type="evidence" value="ECO:0007669"/>
    <property type="project" value="UniProtKB-UniRule"/>
</dbReference>
<dbReference type="HAMAP" id="MF_00828">
    <property type="entry name" value="PSI_PsaM"/>
    <property type="match status" value="1"/>
</dbReference>
<dbReference type="InterPro" id="IPR010010">
    <property type="entry name" value="PSI_PsaM"/>
</dbReference>
<dbReference type="NCBIfam" id="TIGR03053">
    <property type="entry name" value="PS_I_psaM"/>
    <property type="match status" value="1"/>
</dbReference>
<dbReference type="Pfam" id="PF07465">
    <property type="entry name" value="PsaM"/>
    <property type="match status" value="1"/>
</dbReference>
<gene>
    <name evidence="1" type="primary">psaM</name>
    <name type="ordered locus">Syncc9605_0738</name>
</gene>
<name>PSAM_SYNSC</name>
<comment type="subcellular location">
    <subcellularLocation>
        <location evidence="1">Cellular thylakoid membrane</location>
        <topology evidence="1">Single-pass membrane protein</topology>
    </subcellularLocation>
</comment>
<comment type="similarity">
    <text evidence="1">Belongs to the PsaM family.</text>
</comment>
<comment type="sequence caution" evidence="2">
    <conflict type="erroneous initiation">
        <sequence resource="EMBL-CDS" id="ABB34510"/>
    </conflict>
    <text>Extended N-terminus.</text>
</comment>
<sequence length="34" mass="3569">METVLSAPEVFIALVVAAHAAVLALRLSISLYEA</sequence>
<accession>Q3ALM2</accession>
<feature type="chain" id="PRO_0000277393" description="Photosystem I reaction center subunit XII">
    <location>
        <begin position="1"/>
        <end position="34"/>
    </location>
</feature>
<feature type="transmembrane region" description="Helical" evidence="1">
    <location>
        <begin position="4"/>
        <end position="24"/>
    </location>
</feature>
<proteinExistence type="inferred from homology"/>
<organism>
    <name type="scientific">Synechococcus sp. (strain CC9605)</name>
    <dbReference type="NCBI Taxonomy" id="110662"/>
    <lineage>
        <taxon>Bacteria</taxon>
        <taxon>Bacillati</taxon>
        <taxon>Cyanobacteriota</taxon>
        <taxon>Cyanophyceae</taxon>
        <taxon>Synechococcales</taxon>
        <taxon>Synechococcaceae</taxon>
        <taxon>Synechococcus</taxon>
    </lineage>
</organism>
<reference key="1">
    <citation type="submission" date="2005-07" db="EMBL/GenBank/DDBJ databases">
        <title>Complete sequence of Synechococcus sp. CC9605.</title>
        <authorList>
            <consortium name="US DOE Joint Genome Institute"/>
            <person name="Copeland A."/>
            <person name="Lucas S."/>
            <person name="Lapidus A."/>
            <person name="Barry K."/>
            <person name="Detter J.C."/>
            <person name="Glavina T."/>
            <person name="Hammon N."/>
            <person name="Israni S."/>
            <person name="Pitluck S."/>
            <person name="Schmutz J."/>
            <person name="Martinez M."/>
            <person name="Larimer F."/>
            <person name="Land M."/>
            <person name="Kyrpides N."/>
            <person name="Ivanova N."/>
            <person name="Richardson P."/>
        </authorList>
    </citation>
    <scope>NUCLEOTIDE SEQUENCE [LARGE SCALE GENOMIC DNA]</scope>
    <source>
        <strain>CC9605</strain>
    </source>
</reference>
<protein>
    <recommendedName>
        <fullName evidence="1">Photosystem I reaction center subunit XII</fullName>
    </recommendedName>
    <alternativeName>
        <fullName evidence="1">PSI-M</fullName>
    </alternativeName>
</protein>